<name>RL22_CERS4</name>
<keyword id="KW-1185">Reference proteome</keyword>
<keyword id="KW-0687">Ribonucleoprotein</keyword>
<keyword id="KW-0689">Ribosomal protein</keyword>
<keyword id="KW-0694">RNA-binding</keyword>
<keyword id="KW-0699">rRNA-binding</keyword>
<dbReference type="EMBL" id="CP000143">
    <property type="protein sequence ID" value="ABA77867.1"/>
    <property type="molecule type" value="Genomic_DNA"/>
</dbReference>
<dbReference type="RefSeq" id="WP_002722497.1">
    <property type="nucleotide sequence ID" value="NZ_CP030271.1"/>
</dbReference>
<dbReference type="RefSeq" id="YP_351768.1">
    <property type="nucleotide sequence ID" value="NC_007493.2"/>
</dbReference>
<dbReference type="SMR" id="Q3J5R7"/>
<dbReference type="STRING" id="272943.RSP_1721"/>
<dbReference type="EnsemblBacteria" id="ABA77867">
    <property type="protein sequence ID" value="ABA77867"/>
    <property type="gene ID" value="RSP_1721"/>
</dbReference>
<dbReference type="GeneID" id="67445505"/>
<dbReference type="KEGG" id="rsp:RSP_1721"/>
<dbReference type="PATRIC" id="fig|272943.9.peg.598"/>
<dbReference type="eggNOG" id="COG0091">
    <property type="taxonomic scope" value="Bacteria"/>
</dbReference>
<dbReference type="OrthoDB" id="9805969at2"/>
<dbReference type="PhylomeDB" id="Q3J5R7"/>
<dbReference type="Proteomes" id="UP000002703">
    <property type="component" value="Chromosome 1"/>
</dbReference>
<dbReference type="GO" id="GO:0022625">
    <property type="term" value="C:cytosolic large ribosomal subunit"/>
    <property type="evidence" value="ECO:0007669"/>
    <property type="project" value="TreeGrafter"/>
</dbReference>
<dbReference type="GO" id="GO:0019843">
    <property type="term" value="F:rRNA binding"/>
    <property type="evidence" value="ECO:0007669"/>
    <property type="project" value="UniProtKB-UniRule"/>
</dbReference>
<dbReference type="GO" id="GO:0003735">
    <property type="term" value="F:structural constituent of ribosome"/>
    <property type="evidence" value="ECO:0007669"/>
    <property type="project" value="InterPro"/>
</dbReference>
<dbReference type="GO" id="GO:0006412">
    <property type="term" value="P:translation"/>
    <property type="evidence" value="ECO:0007669"/>
    <property type="project" value="UniProtKB-UniRule"/>
</dbReference>
<dbReference type="CDD" id="cd00336">
    <property type="entry name" value="Ribosomal_L22"/>
    <property type="match status" value="1"/>
</dbReference>
<dbReference type="Gene3D" id="3.90.470.10">
    <property type="entry name" value="Ribosomal protein L22/L17"/>
    <property type="match status" value="1"/>
</dbReference>
<dbReference type="HAMAP" id="MF_01331_B">
    <property type="entry name" value="Ribosomal_uL22_B"/>
    <property type="match status" value="1"/>
</dbReference>
<dbReference type="InterPro" id="IPR001063">
    <property type="entry name" value="Ribosomal_uL22"/>
</dbReference>
<dbReference type="InterPro" id="IPR005727">
    <property type="entry name" value="Ribosomal_uL22_bac/chlpt-type"/>
</dbReference>
<dbReference type="InterPro" id="IPR047867">
    <property type="entry name" value="Ribosomal_uL22_bac/org-type"/>
</dbReference>
<dbReference type="InterPro" id="IPR036394">
    <property type="entry name" value="Ribosomal_uL22_sf"/>
</dbReference>
<dbReference type="NCBIfam" id="TIGR01044">
    <property type="entry name" value="rplV_bact"/>
    <property type="match status" value="1"/>
</dbReference>
<dbReference type="PANTHER" id="PTHR13501">
    <property type="entry name" value="CHLOROPLAST 50S RIBOSOMAL PROTEIN L22-RELATED"/>
    <property type="match status" value="1"/>
</dbReference>
<dbReference type="PANTHER" id="PTHR13501:SF8">
    <property type="entry name" value="LARGE RIBOSOMAL SUBUNIT PROTEIN UL22M"/>
    <property type="match status" value="1"/>
</dbReference>
<dbReference type="Pfam" id="PF00237">
    <property type="entry name" value="Ribosomal_L22"/>
    <property type="match status" value="1"/>
</dbReference>
<dbReference type="SUPFAM" id="SSF54843">
    <property type="entry name" value="Ribosomal protein L22"/>
    <property type="match status" value="1"/>
</dbReference>
<evidence type="ECO:0000255" key="1">
    <source>
        <dbReference type="HAMAP-Rule" id="MF_01331"/>
    </source>
</evidence>
<evidence type="ECO:0000305" key="2"/>
<organism>
    <name type="scientific">Cereibacter sphaeroides (strain ATCC 17023 / DSM 158 / JCM 6121 / CCUG 31486 / LMG 2827 / NBRC 12203 / NCIMB 8253 / ATH 2.4.1.)</name>
    <name type="common">Rhodobacter sphaeroides</name>
    <dbReference type="NCBI Taxonomy" id="272943"/>
    <lineage>
        <taxon>Bacteria</taxon>
        <taxon>Pseudomonadati</taxon>
        <taxon>Pseudomonadota</taxon>
        <taxon>Alphaproteobacteria</taxon>
        <taxon>Rhodobacterales</taxon>
        <taxon>Paracoccaceae</taxon>
        <taxon>Cereibacter</taxon>
    </lineage>
</organism>
<reference key="1">
    <citation type="submission" date="2005-09" db="EMBL/GenBank/DDBJ databases">
        <title>Complete sequence of chromosome 1 of Rhodobacter sphaeroides 2.4.1.</title>
        <authorList>
            <person name="Copeland A."/>
            <person name="Lucas S."/>
            <person name="Lapidus A."/>
            <person name="Barry K."/>
            <person name="Detter J.C."/>
            <person name="Glavina T."/>
            <person name="Hammon N."/>
            <person name="Israni S."/>
            <person name="Pitluck S."/>
            <person name="Richardson P."/>
            <person name="Mackenzie C."/>
            <person name="Choudhary M."/>
            <person name="Larimer F."/>
            <person name="Hauser L.J."/>
            <person name="Land M."/>
            <person name="Donohue T.J."/>
            <person name="Kaplan S."/>
        </authorList>
    </citation>
    <scope>NUCLEOTIDE SEQUENCE [LARGE SCALE GENOMIC DNA]</scope>
    <source>
        <strain>ATCC 17023 / DSM 158 / JCM 6121 / CCUG 31486 / LMG 2827 / NBRC 12203 / NCIMB 8253 / ATH 2.4.1.</strain>
    </source>
</reference>
<gene>
    <name evidence="1" type="primary">rplV</name>
    <name type="ordered locus">RHOS4_02990</name>
    <name type="ORF">RSP_1721</name>
</gene>
<comment type="function">
    <text evidence="1">This protein binds specifically to 23S rRNA; its binding is stimulated by other ribosomal proteins, e.g. L4, L17, and L20. It is important during the early stages of 50S assembly. It makes multiple contacts with different domains of the 23S rRNA in the assembled 50S subunit and ribosome (By similarity).</text>
</comment>
<comment type="function">
    <text evidence="1">The globular domain of the protein is located near the polypeptide exit tunnel on the outside of the subunit, while an extended beta-hairpin is found that lines the wall of the exit tunnel in the center of the 70S ribosome.</text>
</comment>
<comment type="subunit">
    <text evidence="1">Part of the 50S ribosomal subunit.</text>
</comment>
<comment type="similarity">
    <text evidence="1">Belongs to the universal ribosomal protein uL22 family.</text>
</comment>
<protein>
    <recommendedName>
        <fullName evidence="1">Large ribosomal subunit protein uL22</fullName>
    </recommendedName>
    <alternativeName>
        <fullName evidence="2">50S ribosomal protein L22</fullName>
    </alternativeName>
</protein>
<sequence>MGKEKNPRRVGENEAFAKVKMLRTSPQKLNLVAALIRGKKVDKAIADLTFSKKRISQDVLKCLQSAIANAENNHGLDVDELVVSEAFCGKNLVMKRGRPRARGRFGKIMKPFSELTIKVKQVGETA</sequence>
<accession>Q3J5R7</accession>
<feature type="chain" id="PRO_0000243193" description="Large ribosomal subunit protein uL22">
    <location>
        <begin position="1"/>
        <end position="126"/>
    </location>
</feature>
<proteinExistence type="inferred from homology"/>